<reference key="1">
    <citation type="journal article" date="1985" name="Biochim. Biophys. Acta">
        <title>Rat lens beta-crystallins are internally duplicated and homologous to gamma-crystallins.</title>
        <authorList>
            <person name="den Dunnen J.T."/>
            <person name="Moormann R.J.M."/>
            <person name="Schoenmakers J.G.G."/>
        </authorList>
    </citation>
    <scope>NUCLEOTIDE SEQUENCE [MRNA]</scope>
</reference>
<reference key="2">
    <citation type="journal article" date="2002" name="Invest. Ophthalmol. Vis. Sci.">
        <title>Lens proteomics: analysis of rat crystallin sequences and two-dimensional electrophoresis map.</title>
        <authorList>
            <person name="Lampi K.J."/>
            <person name="Shih M."/>
            <person name="Ueda Y."/>
            <person name="Shearer T.R."/>
            <person name="David L.L."/>
        </authorList>
    </citation>
    <scope>NUCLEOTIDE SEQUENCE [MRNA]</scope>
    <scope>PROTEIN SEQUENCE OF 2-211</scope>
    <scope>ACETYLATION AT ALA-2</scope>
    <scope>MASS SPECTROMETRY</scope>
    <scope>VARIANT LEU-42</scope>
    <source>
        <strain>Sprague-Dawley</strain>
        <tissue>Lens</tissue>
    </source>
</reference>
<reference key="3">
    <citation type="journal article" date="1993" name="FEBS Lett.">
        <title>Beta-crystallins insolubilized by calpain II in vitro contain cleavage sites similar to beta-crystallins insolubilized during cataract.</title>
        <authorList>
            <person name="David L.L."/>
            <person name="Shearer T.R."/>
        </authorList>
    </citation>
    <scope>PROTEIN SEQUENCE OF 6-11 AND 18-23</scope>
</reference>
<protein>
    <recommendedName>
        <fullName>Beta-crystallin B3</fullName>
    </recommendedName>
    <alternativeName>
        <fullName>Beta-B3 crystallin</fullName>
    </alternativeName>
    <component>
        <recommendedName>
            <fullName>Beta-crystallin B3, N-terminally processed</fullName>
        </recommendedName>
    </component>
</protein>
<evidence type="ECO:0000250" key="1"/>
<evidence type="ECO:0000250" key="2">
    <source>
        <dbReference type="UniProtKB" id="P26998"/>
    </source>
</evidence>
<evidence type="ECO:0000255" key="3">
    <source>
        <dbReference type="PROSITE-ProRule" id="PRU00028"/>
    </source>
</evidence>
<evidence type="ECO:0000269" key="4">
    <source>
    </source>
</evidence>
<evidence type="ECO:0000305" key="5"/>
<name>CRBB3_RAT</name>
<gene>
    <name type="primary">Crybb3</name>
</gene>
<keyword id="KW-0007">Acetylation</keyword>
<keyword id="KW-0903">Direct protein sequencing</keyword>
<keyword id="KW-0273">Eye lens protein</keyword>
<keyword id="KW-1185">Reference proteome</keyword>
<keyword id="KW-0677">Repeat</keyword>
<organism>
    <name type="scientific">Rattus norvegicus</name>
    <name type="common">Rat</name>
    <dbReference type="NCBI Taxonomy" id="10116"/>
    <lineage>
        <taxon>Eukaryota</taxon>
        <taxon>Metazoa</taxon>
        <taxon>Chordata</taxon>
        <taxon>Craniata</taxon>
        <taxon>Vertebrata</taxon>
        <taxon>Euteleostomi</taxon>
        <taxon>Mammalia</taxon>
        <taxon>Eutheria</taxon>
        <taxon>Euarchontoglires</taxon>
        <taxon>Glires</taxon>
        <taxon>Rodentia</taxon>
        <taxon>Myomorpha</taxon>
        <taxon>Muroidea</taxon>
        <taxon>Muridae</taxon>
        <taxon>Murinae</taxon>
        <taxon>Rattus</taxon>
    </lineage>
</organism>
<feature type="chain" id="PRO_0000423201" description="Beta-crystallin B3">
    <location>
        <begin position="1"/>
        <end position="211"/>
    </location>
</feature>
<feature type="initiator methionine" description="Removed; alternate" evidence="4">
    <location>
        <position position="1"/>
    </location>
</feature>
<feature type="chain" id="PRO_0000057562" description="Beta-crystallin B3, N-terminally processed">
    <location>
        <begin position="2"/>
        <end position="211"/>
    </location>
</feature>
<feature type="domain" description="Beta/gamma crystallin 'Greek key' 1" evidence="3">
    <location>
        <begin position="24"/>
        <end position="63"/>
    </location>
</feature>
<feature type="domain" description="Beta/gamma crystallin 'Greek key' 2" evidence="3">
    <location>
        <begin position="64"/>
        <end position="108"/>
    </location>
</feature>
<feature type="domain" description="Beta/gamma crystallin 'Greek key' 3" evidence="3">
    <location>
        <begin position="114"/>
        <end position="155"/>
    </location>
</feature>
<feature type="domain" description="Beta/gamma crystallin 'Greek key' 4" evidence="3">
    <location>
        <begin position="156"/>
        <end position="198"/>
    </location>
</feature>
<feature type="region of interest" description="N-terminal arm">
    <location>
        <begin position="2"/>
        <end position="23"/>
    </location>
</feature>
<feature type="region of interest" description="Connecting peptide">
    <location>
        <begin position="109"/>
        <end position="113"/>
    </location>
</feature>
<feature type="region of interest" description="C-terminal arm">
    <location>
        <begin position="200"/>
        <end position="211"/>
    </location>
</feature>
<feature type="modified residue" description="N-acetylmethionine" evidence="2">
    <location>
        <position position="1"/>
    </location>
</feature>
<feature type="modified residue" description="N-acetylalanine; in Beta-crystallin B3, N-terminally processed" evidence="4">
    <location>
        <position position="2"/>
    </location>
</feature>
<feature type="sequence variant" evidence="4">
    <original>S</original>
    <variation>L</variation>
    <location>
        <position position="42"/>
    </location>
</feature>
<feature type="sequence conflict" description="In Ref. 1; CAA29328." evidence="5" ref="1">
    <original>S</original>
    <variation>N</variation>
    <location>
        <position position="14"/>
    </location>
</feature>
<feature type="sequence conflict" description="In Ref. 1; CAA29328." evidence="5" ref="1">
    <original>R</original>
    <variation>A</variation>
    <location>
        <position position="88"/>
    </location>
</feature>
<sequence length="211" mass="24334">MAEQHGAPEQAAASKSHGGLGGSYKVTVYELENFQGKRCELSAECPNLTESLLQKVGSIQVESGPWLAFERRAFRGEQFVLEKGDYPRWDAWSSSRRSDILLSLRPLHIDGPDHKLHLFENPAFSGRKMEIVDDDVPSLWAHGFQDRVASIRVINGTWVGYEFPGYRGRQYVFERGEFRHWNEWDANQPQLQSVRRIRDQKWHKRGCFLSS</sequence>
<proteinExistence type="evidence at protein level"/>
<dbReference type="EMBL" id="X05899">
    <property type="protein sequence ID" value="CAA29328.1"/>
    <property type="molecule type" value="mRNA"/>
</dbReference>
<dbReference type="EMBL" id="AF287304">
    <property type="protein sequence ID" value="AAF98363.1"/>
    <property type="molecule type" value="mRNA"/>
</dbReference>
<dbReference type="PIR" id="A02926">
    <property type="entry name" value="CYRTB3"/>
</dbReference>
<dbReference type="RefSeq" id="NP_113878.1">
    <property type="nucleotide sequence ID" value="NM_031690.1"/>
</dbReference>
<dbReference type="RefSeq" id="XP_006249634.1">
    <property type="nucleotide sequence ID" value="XM_006249572.2"/>
</dbReference>
<dbReference type="RefSeq" id="XP_017453937.1">
    <property type="nucleotide sequence ID" value="XM_017598448.1"/>
</dbReference>
<dbReference type="SMR" id="P02524"/>
<dbReference type="FunCoup" id="P02524">
    <property type="interactions" value="14"/>
</dbReference>
<dbReference type="STRING" id="10116.ENSRNOP00000067156"/>
<dbReference type="iPTMnet" id="P02524"/>
<dbReference type="PhosphoSitePlus" id="P02524"/>
<dbReference type="PaxDb" id="10116-ENSRNOP00000067156"/>
<dbReference type="Ensembl" id="ENSRNOT00000071328.2">
    <property type="protein sequence ID" value="ENSRNOP00000067156.1"/>
    <property type="gene ID" value="ENSRNOG00000047673.2"/>
</dbReference>
<dbReference type="GeneID" id="64349"/>
<dbReference type="KEGG" id="rno:64349"/>
<dbReference type="AGR" id="RGD:61980"/>
<dbReference type="CTD" id="1417"/>
<dbReference type="RGD" id="61980">
    <property type="gene designation" value="Crybb3"/>
</dbReference>
<dbReference type="eggNOG" id="ENOG502QTNZ">
    <property type="taxonomic scope" value="Eukaryota"/>
</dbReference>
<dbReference type="GeneTree" id="ENSGT00940000158425"/>
<dbReference type="HOGENOM" id="CLU_081883_0_1_1"/>
<dbReference type="InParanoid" id="P02524"/>
<dbReference type="OMA" id="RIRDRKW"/>
<dbReference type="OrthoDB" id="8701124at2759"/>
<dbReference type="PhylomeDB" id="P02524"/>
<dbReference type="PRO" id="PR:P02524"/>
<dbReference type="Proteomes" id="UP000002494">
    <property type="component" value="Chromosome 12"/>
</dbReference>
<dbReference type="GO" id="GO:0005212">
    <property type="term" value="F:structural constituent of eye lens"/>
    <property type="evidence" value="ECO:0000314"/>
    <property type="project" value="RGD"/>
</dbReference>
<dbReference type="GO" id="GO:0002088">
    <property type="term" value="P:lens development in camera-type eye"/>
    <property type="evidence" value="ECO:0000318"/>
    <property type="project" value="GO_Central"/>
</dbReference>
<dbReference type="GO" id="GO:0007601">
    <property type="term" value="P:visual perception"/>
    <property type="evidence" value="ECO:0000318"/>
    <property type="project" value="GO_Central"/>
</dbReference>
<dbReference type="FunFam" id="2.60.20.10:FF:000005">
    <property type="entry name" value="Crystallin, beta B1"/>
    <property type="match status" value="1"/>
</dbReference>
<dbReference type="FunFam" id="2.60.20.10:FF:000002">
    <property type="entry name" value="Crystallin, beta B2"/>
    <property type="match status" value="1"/>
</dbReference>
<dbReference type="Gene3D" id="2.60.20.10">
    <property type="entry name" value="Crystallins"/>
    <property type="match status" value="2"/>
</dbReference>
<dbReference type="InterPro" id="IPR050252">
    <property type="entry name" value="Beta/Gamma-Crystallin"/>
</dbReference>
<dbReference type="InterPro" id="IPR001064">
    <property type="entry name" value="Beta/gamma_crystallin"/>
</dbReference>
<dbReference type="InterPro" id="IPR011024">
    <property type="entry name" value="G_crystallin-like"/>
</dbReference>
<dbReference type="PANTHER" id="PTHR11818:SF13">
    <property type="entry name" value="BETA-CRYSTALLIN B3"/>
    <property type="match status" value="1"/>
</dbReference>
<dbReference type="PANTHER" id="PTHR11818">
    <property type="entry name" value="BETA/GAMMA CRYSTALLIN"/>
    <property type="match status" value="1"/>
</dbReference>
<dbReference type="Pfam" id="PF00030">
    <property type="entry name" value="Crystall"/>
    <property type="match status" value="2"/>
</dbReference>
<dbReference type="PRINTS" id="PR01367">
    <property type="entry name" value="BGCRYSTALLIN"/>
</dbReference>
<dbReference type="SMART" id="SM00247">
    <property type="entry name" value="XTALbg"/>
    <property type="match status" value="2"/>
</dbReference>
<dbReference type="SUPFAM" id="SSF49695">
    <property type="entry name" value="gamma-Crystallin-like"/>
    <property type="match status" value="1"/>
</dbReference>
<dbReference type="PROSITE" id="PS50915">
    <property type="entry name" value="CRYSTALLIN_BETA_GAMMA"/>
    <property type="match status" value="4"/>
</dbReference>
<comment type="function">
    <text>Crystallins are the dominant structural components of the vertebrate eye lens.</text>
</comment>
<comment type="subunit">
    <text evidence="1">Homo/heterodimer, or complexes of higher-order. The structure of beta-crystallin oligomers seems to be stabilized through interactions between the N-terminal arms (By similarity).</text>
</comment>
<comment type="domain">
    <text>Has a two-domain beta-structure, folded into four very similar Greek key motifs.</text>
</comment>
<comment type="mass spectrometry" mass="24271.5" method="Electrospray" evidence="4">
    <molecule>Beta-crystallin B3, N-terminally processed</molecule>
    <text>Variant Leu-42.</text>
</comment>
<comment type="mass spectrometry" mass="24245.7" method="Electrospray" evidence="4">
    <molecule>Beta-crystallin B3, N-terminally processed</molecule>
    <text>Variant Ser-42.</text>
</comment>
<comment type="similarity">
    <text evidence="5">Belongs to the beta/gamma-crystallin family.</text>
</comment>
<accession>P02524</accession>
<accession>P70522</accession>
<accession>Q9ET12</accession>